<feature type="chain" id="PRO_0000159843" description="tRNA (cytidine-2'-O-)-methyltransferase TrmJ">
    <location>
        <begin position="1"/>
        <end position="230"/>
    </location>
</feature>
<feature type="binding site" evidence="1">
    <location>
        <begin position="79"/>
        <end position="81"/>
    </location>
    <ligand>
        <name>S-adenosyl-L-methionine</name>
        <dbReference type="ChEBI" id="CHEBI:59789"/>
    </ligand>
</feature>
<feature type="binding site" evidence="1">
    <location>
        <position position="115"/>
    </location>
    <ligand>
        <name>S-adenosyl-L-methionine</name>
        <dbReference type="ChEBI" id="CHEBI:59789"/>
    </ligand>
</feature>
<feature type="binding site" evidence="1">
    <location>
        <position position="135"/>
    </location>
    <ligand>
        <name>S-adenosyl-L-methionine</name>
        <dbReference type="ChEBI" id="CHEBI:59789"/>
    </ligand>
</feature>
<feature type="binding site" evidence="1">
    <location>
        <begin position="142"/>
        <end position="144"/>
    </location>
    <ligand>
        <name>S-adenosyl-L-methionine</name>
        <dbReference type="ChEBI" id="CHEBI:59789"/>
    </ligand>
</feature>
<name>TRMJ_METJA</name>
<accession>Q58871</accession>
<organism>
    <name type="scientific">Methanocaldococcus jannaschii (strain ATCC 43067 / DSM 2661 / JAL-1 / JCM 10045 / NBRC 100440)</name>
    <name type="common">Methanococcus jannaschii</name>
    <dbReference type="NCBI Taxonomy" id="243232"/>
    <lineage>
        <taxon>Archaea</taxon>
        <taxon>Methanobacteriati</taxon>
        <taxon>Methanobacteriota</taxon>
        <taxon>Methanomada group</taxon>
        <taxon>Methanococci</taxon>
        <taxon>Methanococcales</taxon>
        <taxon>Methanocaldococcaceae</taxon>
        <taxon>Methanocaldococcus</taxon>
    </lineage>
</organism>
<reference key="1">
    <citation type="journal article" date="1996" name="Science">
        <title>Complete genome sequence of the methanogenic archaeon, Methanococcus jannaschii.</title>
        <authorList>
            <person name="Bult C.J."/>
            <person name="White O."/>
            <person name="Olsen G.J."/>
            <person name="Zhou L."/>
            <person name="Fleischmann R.D."/>
            <person name="Sutton G.G."/>
            <person name="Blake J.A."/>
            <person name="FitzGerald L.M."/>
            <person name="Clayton R.A."/>
            <person name="Gocayne J.D."/>
            <person name="Kerlavage A.R."/>
            <person name="Dougherty B.A."/>
            <person name="Tomb J.-F."/>
            <person name="Adams M.D."/>
            <person name="Reich C.I."/>
            <person name="Overbeek R."/>
            <person name="Kirkness E.F."/>
            <person name="Weinstock K.G."/>
            <person name="Merrick J.M."/>
            <person name="Glodek A."/>
            <person name="Scott J.L."/>
            <person name="Geoghagen N.S.M."/>
            <person name="Weidman J.F."/>
            <person name="Fuhrmann J.L."/>
            <person name="Nguyen D."/>
            <person name="Utterback T.R."/>
            <person name="Kelley J.M."/>
            <person name="Peterson J.D."/>
            <person name="Sadow P.W."/>
            <person name="Hanna M.C."/>
            <person name="Cotton M.D."/>
            <person name="Roberts K.M."/>
            <person name="Hurst M.A."/>
            <person name="Kaine B.P."/>
            <person name="Borodovsky M."/>
            <person name="Klenk H.-P."/>
            <person name="Fraser C.M."/>
            <person name="Smith H.O."/>
            <person name="Woese C.R."/>
            <person name="Venter J.C."/>
        </authorList>
    </citation>
    <scope>NUCLEOTIDE SEQUENCE [LARGE SCALE GENOMIC DNA]</scope>
    <source>
        <strain>ATCC 43067 / DSM 2661 / JAL-1 / JCM 10045 / NBRC 100440</strain>
    </source>
</reference>
<comment type="function">
    <text evidence="1">Catalyzes the formation of 2'O-methylated cytidine (Cm32) at position 32 in tRNA.</text>
</comment>
<comment type="catalytic activity">
    <reaction evidence="1">
        <text>cytidine(32) in tRNA + S-adenosyl-L-methionine = 2'-O-methylcytidine(32) in tRNA + S-adenosyl-L-homocysteine + H(+)</text>
        <dbReference type="Rhea" id="RHEA:42932"/>
        <dbReference type="Rhea" id="RHEA-COMP:10288"/>
        <dbReference type="Rhea" id="RHEA-COMP:10289"/>
        <dbReference type="ChEBI" id="CHEBI:15378"/>
        <dbReference type="ChEBI" id="CHEBI:57856"/>
        <dbReference type="ChEBI" id="CHEBI:59789"/>
        <dbReference type="ChEBI" id="CHEBI:74495"/>
        <dbReference type="ChEBI" id="CHEBI:82748"/>
    </reaction>
</comment>
<comment type="subunit">
    <text evidence="1">Homodimer.</text>
</comment>
<comment type="subcellular location">
    <subcellularLocation>
        <location evidence="1">Cytoplasm</location>
    </subcellularLocation>
</comment>
<comment type="similarity">
    <text evidence="2">Belongs to the class IV-like SAM-binding methyltransferase superfamily. RNA methyltransferase TrmH family.</text>
</comment>
<gene>
    <name evidence="1" type="primary">trmJ</name>
    <name type="ordered locus">MJ1476</name>
</gene>
<evidence type="ECO:0000250" key="1">
    <source>
        <dbReference type="UniProtKB" id="Q4JB16"/>
    </source>
</evidence>
<evidence type="ECO:0000305" key="2"/>
<keyword id="KW-0963">Cytoplasm</keyword>
<keyword id="KW-0489">Methyltransferase</keyword>
<keyword id="KW-1185">Reference proteome</keyword>
<keyword id="KW-0949">S-adenosyl-L-methionine</keyword>
<keyword id="KW-0808">Transferase</keyword>
<keyword id="KW-0819">tRNA processing</keyword>
<protein>
    <recommendedName>
        <fullName evidence="1">tRNA (cytidine-2'-O-)-methyltransferase TrmJ</fullName>
        <ecNumber evidence="1">2.1.1.-</ecNumber>
    </recommendedName>
    <alternativeName>
        <fullName evidence="1">tRNA (cytidine(32)-2'-O)-methyltransferase</fullName>
    </alternativeName>
    <alternativeName>
        <fullName evidence="1">tRNA Cm32 methyltransferase</fullName>
    </alternativeName>
</protein>
<sequence>MIIMISVILVNPKYSGNVGSIARVMMNFGFEELRIVGDKSIINNEAYMMAVHAREILDNAKFYNTFDEAIGDLDFVIATSGARGGDRNLKRVPITPKELADKILEVKGNIGIVFGREDDGLRNEEIDKCDLLVSIPTSEKYPIMNLSHAVAVILYEIYTKKVRNKFLDINMREASKEDKELLIRKFNEFIDKNEKIPEHKKELCKIIFKRLVNRAFISGKEAWTLMSAFK</sequence>
<proteinExistence type="inferred from homology"/>
<dbReference type="EC" id="2.1.1.-" evidence="1"/>
<dbReference type="EMBL" id="L77117">
    <property type="protein sequence ID" value="AAB99481.1"/>
    <property type="molecule type" value="Genomic_DNA"/>
</dbReference>
<dbReference type="PIR" id="C64484">
    <property type="entry name" value="C64484"/>
</dbReference>
<dbReference type="SMR" id="Q58871"/>
<dbReference type="STRING" id="243232.MJ_1476"/>
<dbReference type="PaxDb" id="243232-MJ_1476"/>
<dbReference type="EnsemblBacteria" id="AAB99481">
    <property type="protein sequence ID" value="AAB99481"/>
    <property type="gene ID" value="MJ_1476"/>
</dbReference>
<dbReference type="KEGG" id="mja:MJ_1476"/>
<dbReference type="eggNOG" id="arCOG01018">
    <property type="taxonomic scope" value="Archaea"/>
</dbReference>
<dbReference type="HOGENOM" id="CLU_056931_3_0_2"/>
<dbReference type="InParanoid" id="Q58871"/>
<dbReference type="PhylomeDB" id="Q58871"/>
<dbReference type="Proteomes" id="UP000000805">
    <property type="component" value="Chromosome"/>
</dbReference>
<dbReference type="GO" id="GO:0005829">
    <property type="term" value="C:cytosol"/>
    <property type="evidence" value="ECO:0000318"/>
    <property type="project" value="GO_Central"/>
</dbReference>
<dbReference type="GO" id="GO:0003723">
    <property type="term" value="F:RNA binding"/>
    <property type="evidence" value="ECO:0007669"/>
    <property type="project" value="InterPro"/>
</dbReference>
<dbReference type="GO" id="GO:0160206">
    <property type="term" value="F:tRNA (cytidine(32)/uridine(32)-2'-O)-methyltransferase activity"/>
    <property type="evidence" value="ECO:0007669"/>
    <property type="project" value="RHEA"/>
</dbReference>
<dbReference type="GO" id="GO:0002128">
    <property type="term" value="P:tRNA nucleoside ribose methylation"/>
    <property type="evidence" value="ECO:0000318"/>
    <property type="project" value="GO_Central"/>
</dbReference>
<dbReference type="CDD" id="cd18093">
    <property type="entry name" value="SpoU-like_TrmJ"/>
    <property type="match status" value="1"/>
</dbReference>
<dbReference type="FunFam" id="3.40.1280.10:FF:000019">
    <property type="entry name" value="Putative tRNA/rRNA methyltransferase"/>
    <property type="match status" value="1"/>
</dbReference>
<dbReference type="Gene3D" id="3.40.1280.10">
    <property type="match status" value="1"/>
</dbReference>
<dbReference type="InterPro" id="IPR029028">
    <property type="entry name" value="Alpha/beta_knot_MTases"/>
</dbReference>
<dbReference type="InterPro" id="IPR004384">
    <property type="entry name" value="RNA_MeTrfase_TrmJ/LasT"/>
</dbReference>
<dbReference type="InterPro" id="IPR001537">
    <property type="entry name" value="SpoU_MeTrfase"/>
</dbReference>
<dbReference type="InterPro" id="IPR029026">
    <property type="entry name" value="tRNA_m1G_MTases_N"/>
</dbReference>
<dbReference type="NCBIfam" id="TIGR00050">
    <property type="entry name" value="rRNA_methyl_1"/>
    <property type="match status" value="1"/>
</dbReference>
<dbReference type="PANTHER" id="PTHR42786:SF2">
    <property type="entry name" value="TRNA (CYTIDINE_URIDINE-2'-O-)-METHYLTRANSFERASE TRMJ"/>
    <property type="match status" value="1"/>
</dbReference>
<dbReference type="PANTHER" id="PTHR42786">
    <property type="entry name" value="TRNA/RRNA METHYLTRANSFERASE"/>
    <property type="match status" value="1"/>
</dbReference>
<dbReference type="Pfam" id="PF00588">
    <property type="entry name" value="SpoU_methylase"/>
    <property type="match status" value="1"/>
</dbReference>
<dbReference type="PIRSF" id="PIRSF004808">
    <property type="entry name" value="LasT"/>
    <property type="match status" value="1"/>
</dbReference>
<dbReference type="SUPFAM" id="SSF75217">
    <property type="entry name" value="alpha/beta knot"/>
    <property type="match status" value="1"/>
</dbReference>